<accession>P38231</accession>
<accession>D6VQ47</accession>
<reference key="1">
    <citation type="journal article" date="1994" name="EMBO J.">
        <title>Complete DNA sequence of yeast chromosome II.</title>
        <authorList>
            <person name="Feldmann H."/>
            <person name="Aigle M."/>
            <person name="Aljinovic G."/>
            <person name="Andre B."/>
            <person name="Baclet M.C."/>
            <person name="Barthe C."/>
            <person name="Baur A."/>
            <person name="Becam A.-M."/>
            <person name="Biteau N."/>
            <person name="Boles E."/>
            <person name="Brandt T."/>
            <person name="Brendel M."/>
            <person name="Brueckner M."/>
            <person name="Bussereau F."/>
            <person name="Christiansen C."/>
            <person name="Contreras R."/>
            <person name="Crouzet M."/>
            <person name="Cziepluch C."/>
            <person name="Demolis N."/>
            <person name="Delaveau T."/>
            <person name="Doignon F."/>
            <person name="Domdey H."/>
            <person name="Duesterhus S."/>
            <person name="Dubois E."/>
            <person name="Dujon B."/>
            <person name="El Bakkoury M."/>
            <person name="Entian K.-D."/>
            <person name="Feuermann M."/>
            <person name="Fiers W."/>
            <person name="Fobo G.M."/>
            <person name="Fritz C."/>
            <person name="Gassenhuber J."/>
            <person name="Glansdorff N."/>
            <person name="Goffeau A."/>
            <person name="Grivell L.A."/>
            <person name="de Haan M."/>
            <person name="Hein C."/>
            <person name="Herbert C.J."/>
            <person name="Hollenberg C.P."/>
            <person name="Holmstroem K."/>
            <person name="Jacq C."/>
            <person name="Jacquet M."/>
            <person name="Jauniaux J.-C."/>
            <person name="Jonniaux J.-L."/>
            <person name="Kallesoee T."/>
            <person name="Kiesau P."/>
            <person name="Kirchrath L."/>
            <person name="Koetter P."/>
            <person name="Korol S."/>
            <person name="Liebl S."/>
            <person name="Logghe M."/>
            <person name="Lohan A.J.E."/>
            <person name="Louis E.J."/>
            <person name="Li Z.Y."/>
            <person name="Maat M.J."/>
            <person name="Mallet L."/>
            <person name="Mannhaupt G."/>
            <person name="Messenguy F."/>
            <person name="Miosga T."/>
            <person name="Molemans F."/>
            <person name="Mueller S."/>
            <person name="Nasr F."/>
            <person name="Obermaier B."/>
            <person name="Perea J."/>
            <person name="Pierard A."/>
            <person name="Piravandi E."/>
            <person name="Pohl F.M."/>
            <person name="Pohl T.M."/>
            <person name="Potier S."/>
            <person name="Proft M."/>
            <person name="Purnelle B."/>
            <person name="Ramezani Rad M."/>
            <person name="Rieger M."/>
            <person name="Rose M."/>
            <person name="Schaaff-Gerstenschlaeger I."/>
            <person name="Scherens B."/>
            <person name="Schwarzlose C."/>
            <person name="Skala J."/>
            <person name="Slonimski P.P."/>
            <person name="Smits P.H.M."/>
            <person name="Souciet J.-L."/>
            <person name="Steensma H.Y."/>
            <person name="Stucka R."/>
            <person name="Urrestarazu L.A."/>
            <person name="van der Aart Q.J.M."/>
            <person name="Van Dyck L."/>
            <person name="Vassarotti A."/>
            <person name="Vetter I."/>
            <person name="Vierendeels F."/>
            <person name="Vissers S."/>
            <person name="Wagner G."/>
            <person name="de Wergifosse P."/>
            <person name="Wolfe K.H."/>
            <person name="Zagulski M."/>
            <person name="Zimmermann F.K."/>
            <person name="Mewes H.-W."/>
            <person name="Kleine K."/>
        </authorList>
    </citation>
    <scope>NUCLEOTIDE SEQUENCE [LARGE SCALE GENOMIC DNA]</scope>
    <source>
        <strain>ATCC 204508 / S288c</strain>
    </source>
</reference>
<reference key="2">
    <citation type="journal article" date="2014" name="G3 (Bethesda)">
        <title>The reference genome sequence of Saccharomyces cerevisiae: Then and now.</title>
        <authorList>
            <person name="Engel S.R."/>
            <person name="Dietrich F.S."/>
            <person name="Fisk D.G."/>
            <person name="Binkley G."/>
            <person name="Balakrishnan R."/>
            <person name="Costanzo M.C."/>
            <person name="Dwight S.S."/>
            <person name="Hitz B.C."/>
            <person name="Karra K."/>
            <person name="Nash R.S."/>
            <person name="Weng S."/>
            <person name="Wong E.D."/>
            <person name="Lloyd P."/>
            <person name="Skrzypek M.S."/>
            <person name="Miyasato S.R."/>
            <person name="Simison M."/>
            <person name="Cherry J.M."/>
        </authorList>
    </citation>
    <scope>GENOME REANNOTATION</scope>
    <source>
        <strain>ATCC 204508 / S288c</strain>
    </source>
</reference>
<reference key="3">
    <citation type="journal article" date="2007" name="Genome Res.">
        <title>Approaching a complete repository of sequence-verified protein-encoding clones for Saccharomyces cerevisiae.</title>
        <authorList>
            <person name="Hu Y."/>
            <person name="Rolfs A."/>
            <person name="Bhullar B."/>
            <person name="Murthy T.V.S."/>
            <person name="Zhu C."/>
            <person name="Berger M.F."/>
            <person name="Camargo A.A."/>
            <person name="Kelley F."/>
            <person name="McCarron S."/>
            <person name="Jepson D."/>
            <person name="Richardson A."/>
            <person name="Raphael J."/>
            <person name="Moreira D."/>
            <person name="Taycher E."/>
            <person name="Zuo D."/>
            <person name="Mohr S."/>
            <person name="Kane M.F."/>
            <person name="Williamson J."/>
            <person name="Simpson A.J.G."/>
            <person name="Bulyk M.L."/>
            <person name="Harlow E."/>
            <person name="Marsischky G."/>
            <person name="Kolodner R.D."/>
            <person name="LaBaer J."/>
        </authorList>
    </citation>
    <scope>NUCLEOTIDE SEQUENCE [GENOMIC DNA]</scope>
    <source>
        <strain>ATCC 204508 / S288c</strain>
    </source>
</reference>
<reference key="4">
    <citation type="journal article" date="1999" name="J. Bacteriol.">
        <title>Genome-wide transcriptional analysis of aerobic and anaerobic chemostat cultures of Saccharomyces cerevisiae.</title>
        <authorList>
            <person name="ter Linde J.J.M."/>
            <person name="Liang H."/>
            <person name="Davis R.W."/>
            <person name="Steensma H.Y."/>
            <person name="van Dijken J.P."/>
            <person name="Pronk J.T."/>
        </authorList>
    </citation>
    <scope>INDUCTION</scope>
</reference>
<reference key="5">
    <citation type="journal article" date="2003" name="Nature">
        <title>Global analysis of protein localization in budding yeast.</title>
        <authorList>
            <person name="Huh W.-K."/>
            <person name="Falvo J.V."/>
            <person name="Gerke L.C."/>
            <person name="Carroll A.S."/>
            <person name="Howson R.W."/>
            <person name="Weissman J.S."/>
            <person name="O'Shea E.K."/>
        </authorList>
    </citation>
    <scope>SUBCELLULAR LOCATION [LARGE SCALE ANALYSIS]</scope>
</reference>
<reference key="6">
    <citation type="journal article" date="2003" name="Nature">
        <title>Global analysis of protein expression in yeast.</title>
        <authorList>
            <person name="Ghaemmaghami S."/>
            <person name="Huh W.-K."/>
            <person name="Bower K."/>
            <person name="Howson R.W."/>
            <person name="Belle A."/>
            <person name="Dephoure N."/>
            <person name="O'Shea E.K."/>
            <person name="Weissman J.S."/>
        </authorList>
    </citation>
    <scope>LEVEL OF PROTEIN EXPRESSION [LARGE SCALE ANALYSIS]</scope>
</reference>
<reference key="7">
    <citation type="journal article" date="2003" name="Proc. Natl. Acad. Sci. U.S.A.">
        <title>The proteome of Saccharomyces cerevisiae mitochondria.</title>
        <authorList>
            <person name="Sickmann A."/>
            <person name="Reinders J."/>
            <person name="Wagner Y."/>
            <person name="Joppich C."/>
            <person name="Zahedi R.P."/>
            <person name="Meyer H.E."/>
            <person name="Schoenfisch B."/>
            <person name="Perschil I."/>
            <person name="Chacinska A."/>
            <person name="Guiard B."/>
            <person name="Rehling P."/>
            <person name="Pfanner N."/>
            <person name="Meisinger C."/>
        </authorList>
    </citation>
    <scope>SUBCELLULAR LOCATION [LARGE SCALE ANALYSIS]</scope>
    <source>
        <strain>ATCC 76625 / YPH499</strain>
    </source>
</reference>
<reference key="8">
    <citation type="journal article" date="2004" name="J. Biol. Chem.">
        <title>Exploratory and confirmatory gene expression profiling of mac1Delta.</title>
        <authorList>
            <person name="De Freitas J.M."/>
            <person name="Kim J.H."/>
            <person name="Poynton H."/>
            <person name="Su T."/>
            <person name="Wintz H."/>
            <person name="Fox T."/>
            <person name="Holman P."/>
            <person name="Loguinov A."/>
            <person name="Keles S."/>
            <person name="van der Laan M."/>
            <person name="Vulpe C."/>
        </authorList>
    </citation>
    <scope>INDUCTION</scope>
    <scope>PROBABLE FUNCTION</scope>
</reference>
<reference key="9">
    <citation type="journal article" date="2005" name="Physiol. Genomics">
        <title>Gene expression profiling and phenotype analyses of S. cerevisiae in response to changing copper reveals six genes with new roles in copper and iron metabolism.</title>
        <authorList>
            <person name="van Bakel H."/>
            <person name="Strengman E."/>
            <person name="Wijmenga C."/>
            <person name="Holstege F.C.P."/>
        </authorList>
    </citation>
    <scope>INDUCTION</scope>
</reference>
<evidence type="ECO:0000255" key="1"/>
<evidence type="ECO:0000269" key="2">
    <source>
    </source>
</evidence>
<evidence type="ECO:0000269" key="3">
    <source>
    </source>
</evidence>
<evidence type="ECO:0000269" key="4">
    <source>
    </source>
</evidence>
<evidence type="ECO:0000269" key="5">
    <source>
    </source>
</evidence>
<evidence type="ECO:0000305" key="6"/>
<feature type="transit peptide" description="Mitochondrion" evidence="1">
    <location>
        <begin position="1"/>
        <end position="38"/>
    </location>
</feature>
<feature type="chain" id="PRO_0000202474" description="Protein FMP23, mitochondrial">
    <location>
        <begin position="39"/>
        <end position="175"/>
    </location>
</feature>
<comment type="function">
    <text>May be involved in mitochondrial iron or copper homeostatis.</text>
</comment>
<comment type="subcellular location">
    <subcellularLocation>
        <location evidence="6">Mitochondrion</location>
    </subcellularLocation>
</comment>
<comment type="induction">
    <text evidence="2 3 5">In aerobic conditions. Expression is regulated by copper levels and the MAC1 copper-responsive transcription factor.</text>
</comment>
<comment type="miscellaneous">
    <text evidence="4">Present with 2160 molecules/cell in log phase SD medium.</text>
</comment>
<organism>
    <name type="scientific">Saccharomyces cerevisiae (strain ATCC 204508 / S288c)</name>
    <name type="common">Baker's yeast</name>
    <dbReference type="NCBI Taxonomy" id="559292"/>
    <lineage>
        <taxon>Eukaryota</taxon>
        <taxon>Fungi</taxon>
        <taxon>Dikarya</taxon>
        <taxon>Ascomycota</taxon>
        <taxon>Saccharomycotina</taxon>
        <taxon>Saccharomycetes</taxon>
        <taxon>Saccharomycetales</taxon>
        <taxon>Saccharomycetaceae</taxon>
        <taxon>Saccharomyces</taxon>
    </lineage>
</organism>
<gene>
    <name type="primary">FMP23</name>
    <name type="ordered locus">YBR047W</name>
    <name type="ORF">YBR0422</name>
</gene>
<keyword id="KW-0496">Mitochondrion</keyword>
<keyword id="KW-1185">Reference proteome</keyword>
<keyword id="KW-0809">Transit peptide</keyword>
<proteinExistence type="evidence at protein level"/>
<sequence>MLINHLSKIRTVRHFSNIKPVLSKEVSRRVIVAPASHFKTSSPNVKSNIPIHEYKQLPEDSNYIEKHYKELQVFLNEFLIKKLNKTYADFEGDPDELVFQLEKFIELEVTPRYTNHSAPDGCEERFKSIGDRIVVDRYLDFVKDVRLTLLLNGGHSFIFDVMLQAKEVFDKMQKE</sequence>
<dbReference type="EMBL" id="Z35916">
    <property type="protein sequence ID" value="CAA84989.1"/>
    <property type="molecule type" value="Genomic_DNA"/>
</dbReference>
<dbReference type="EMBL" id="AY557704">
    <property type="protein sequence ID" value="AAS56030.1"/>
    <property type="molecule type" value="Genomic_DNA"/>
</dbReference>
<dbReference type="EMBL" id="BK006936">
    <property type="protein sequence ID" value="DAA07167.1"/>
    <property type="molecule type" value="Genomic_DNA"/>
</dbReference>
<dbReference type="PIR" id="S45905">
    <property type="entry name" value="S45905"/>
</dbReference>
<dbReference type="RefSeq" id="NP_009603.1">
    <property type="nucleotide sequence ID" value="NM_001178395.1"/>
</dbReference>
<dbReference type="BioGRID" id="32749">
    <property type="interactions" value="93"/>
</dbReference>
<dbReference type="DIP" id="DIP-5297N"/>
<dbReference type="FunCoup" id="P38231">
    <property type="interactions" value="71"/>
</dbReference>
<dbReference type="MINT" id="P38231"/>
<dbReference type="STRING" id="4932.YBR047W"/>
<dbReference type="PaxDb" id="4932-YBR047W"/>
<dbReference type="PeptideAtlas" id="P38231"/>
<dbReference type="EnsemblFungi" id="YBR047W_mRNA">
    <property type="protein sequence ID" value="YBR047W"/>
    <property type="gene ID" value="YBR047W"/>
</dbReference>
<dbReference type="GeneID" id="852336"/>
<dbReference type="KEGG" id="sce:YBR047W"/>
<dbReference type="AGR" id="SGD:S000000251"/>
<dbReference type="SGD" id="S000000251">
    <property type="gene designation" value="FMP23"/>
</dbReference>
<dbReference type="VEuPathDB" id="FungiDB:YBR047W"/>
<dbReference type="eggNOG" id="ENOG502S3B9">
    <property type="taxonomic scope" value="Eukaryota"/>
</dbReference>
<dbReference type="HOGENOM" id="CLU_1483131_0_0_1"/>
<dbReference type="InParanoid" id="P38231"/>
<dbReference type="OMA" id="GGHTFIF"/>
<dbReference type="OrthoDB" id="4029988at2759"/>
<dbReference type="BioCyc" id="YEAST:G3O-29019-MONOMER"/>
<dbReference type="BioGRID-ORCS" id="852336">
    <property type="hits" value="1 hit in 10 CRISPR screens"/>
</dbReference>
<dbReference type="PRO" id="PR:P38231"/>
<dbReference type="Proteomes" id="UP000002311">
    <property type="component" value="Chromosome II"/>
</dbReference>
<dbReference type="RNAct" id="P38231">
    <property type="molecule type" value="protein"/>
</dbReference>
<dbReference type="GO" id="GO:0005739">
    <property type="term" value="C:mitochondrion"/>
    <property type="evidence" value="ECO:0007005"/>
    <property type="project" value="SGD"/>
</dbReference>
<dbReference type="InterPro" id="IPR035283">
    <property type="entry name" value="Fmp23"/>
</dbReference>
<dbReference type="Pfam" id="PF17315">
    <property type="entry name" value="FMP23"/>
    <property type="match status" value="1"/>
</dbReference>
<name>FMP23_YEAST</name>
<protein>
    <recommendedName>
        <fullName>Protein FMP23, mitochondrial</fullName>
    </recommendedName>
</protein>